<keyword id="KW-0025">Alternative splicing</keyword>
<keyword id="KW-0150">Chloroplast</keyword>
<keyword id="KW-0175">Coiled coil</keyword>
<keyword id="KW-1015">Disulfide bond</keyword>
<keyword id="KW-0249">Electron transport</keyword>
<keyword id="KW-0274">FAD</keyword>
<keyword id="KW-0285">Flavoprotein</keyword>
<keyword id="KW-0521">NADP</keyword>
<keyword id="KW-0560">Oxidoreductase</keyword>
<keyword id="KW-0597">Phosphoprotein</keyword>
<keyword id="KW-0602">Photosynthesis</keyword>
<keyword id="KW-0934">Plastid</keyword>
<keyword id="KW-1185">Reference proteome</keyword>
<keyword id="KW-0809">Transit peptide</keyword>
<keyword id="KW-0813">Transport</keyword>
<feature type="transit peptide" description="Chloroplast" evidence="3">
    <location>
        <begin position="1"/>
        <end position="64"/>
    </location>
</feature>
<feature type="chain" id="PRO_0000322575" description="Ferredoxin--NADP reductase, root isozyme 2, chloroplastic">
    <location>
        <begin position="65"/>
        <end position="382"/>
    </location>
</feature>
<feature type="domain" description="FAD-binding FR-type" evidence="4">
    <location>
        <begin position="97"/>
        <end position="225"/>
    </location>
</feature>
<feature type="binding site" evidence="1">
    <location>
        <begin position="235"/>
        <end position="253"/>
    </location>
    <ligand>
        <name>NADP(+)</name>
        <dbReference type="ChEBI" id="CHEBI:58349"/>
    </ligand>
</feature>
<feature type="modified residue" description="Phosphoserine" evidence="2">
    <location>
        <position position="201"/>
    </location>
</feature>
<feature type="modified residue" description="Phosphothreonine" evidence="2">
    <location>
        <position position="233"/>
    </location>
</feature>
<feature type="disulfide bond" evidence="1">
    <location>
        <begin position="200"/>
        <end position="205"/>
    </location>
</feature>
<feature type="splice variant" id="VSP_031938" description="In isoform 3." evidence="7">
    <location>
        <begin position="1"/>
        <end position="65"/>
    </location>
</feature>
<feature type="splice variant" id="VSP_031939" description="In isoform 2." evidence="6">
    <location>
        <position position="29"/>
    </location>
</feature>
<feature type="sequence conflict" description="In Ref. 4; AAM65564." evidence="7" ref="4">
    <original>I</original>
    <variation>V</variation>
    <location>
        <position position="320"/>
    </location>
</feature>
<protein>
    <recommendedName>
        <fullName>Ferredoxin--NADP reductase, root isozyme 2, chloroplastic</fullName>
        <ecNumber>1.18.1.2</ecNumber>
    </recommendedName>
    <alternativeName>
        <fullName>Root FNR 2</fullName>
        <shortName>AtRFNR2</shortName>
    </alternativeName>
</protein>
<reference key="1">
    <citation type="journal article" date="2000" name="Nature">
        <title>Sequence and analysis of chromosome 1 of the plant Arabidopsis thaliana.</title>
        <authorList>
            <person name="Theologis A."/>
            <person name="Ecker J.R."/>
            <person name="Palm C.J."/>
            <person name="Federspiel N.A."/>
            <person name="Kaul S."/>
            <person name="White O."/>
            <person name="Alonso J."/>
            <person name="Altafi H."/>
            <person name="Araujo R."/>
            <person name="Bowman C.L."/>
            <person name="Brooks S.Y."/>
            <person name="Buehler E."/>
            <person name="Chan A."/>
            <person name="Chao Q."/>
            <person name="Chen H."/>
            <person name="Cheuk R.F."/>
            <person name="Chin C.W."/>
            <person name="Chung M.K."/>
            <person name="Conn L."/>
            <person name="Conway A.B."/>
            <person name="Conway A.R."/>
            <person name="Creasy T.H."/>
            <person name="Dewar K."/>
            <person name="Dunn P."/>
            <person name="Etgu P."/>
            <person name="Feldblyum T.V."/>
            <person name="Feng J.-D."/>
            <person name="Fong B."/>
            <person name="Fujii C.Y."/>
            <person name="Gill J.E."/>
            <person name="Goldsmith A.D."/>
            <person name="Haas B."/>
            <person name="Hansen N.F."/>
            <person name="Hughes B."/>
            <person name="Huizar L."/>
            <person name="Hunter J.L."/>
            <person name="Jenkins J."/>
            <person name="Johnson-Hopson C."/>
            <person name="Khan S."/>
            <person name="Khaykin E."/>
            <person name="Kim C.J."/>
            <person name="Koo H.L."/>
            <person name="Kremenetskaia I."/>
            <person name="Kurtz D.B."/>
            <person name="Kwan A."/>
            <person name="Lam B."/>
            <person name="Langin-Hooper S."/>
            <person name="Lee A."/>
            <person name="Lee J.M."/>
            <person name="Lenz C.A."/>
            <person name="Li J.H."/>
            <person name="Li Y.-P."/>
            <person name="Lin X."/>
            <person name="Liu S.X."/>
            <person name="Liu Z.A."/>
            <person name="Luros J.S."/>
            <person name="Maiti R."/>
            <person name="Marziali A."/>
            <person name="Militscher J."/>
            <person name="Miranda M."/>
            <person name="Nguyen M."/>
            <person name="Nierman W.C."/>
            <person name="Osborne B.I."/>
            <person name="Pai G."/>
            <person name="Peterson J."/>
            <person name="Pham P.K."/>
            <person name="Rizzo M."/>
            <person name="Rooney T."/>
            <person name="Rowley D."/>
            <person name="Sakano H."/>
            <person name="Salzberg S.L."/>
            <person name="Schwartz J.R."/>
            <person name="Shinn P."/>
            <person name="Southwick A.M."/>
            <person name="Sun H."/>
            <person name="Tallon L.J."/>
            <person name="Tambunga G."/>
            <person name="Toriumi M.J."/>
            <person name="Town C.D."/>
            <person name="Utterback T."/>
            <person name="Van Aken S."/>
            <person name="Vaysberg M."/>
            <person name="Vysotskaia V.S."/>
            <person name="Walker M."/>
            <person name="Wu D."/>
            <person name="Yu G."/>
            <person name="Fraser C.M."/>
            <person name="Venter J.C."/>
            <person name="Davis R.W."/>
        </authorList>
    </citation>
    <scope>NUCLEOTIDE SEQUENCE [LARGE SCALE GENOMIC DNA]</scope>
    <source>
        <strain>cv. Columbia</strain>
    </source>
</reference>
<reference key="2">
    <citation type="journal article" date="2017" name="Plant J.">
        <title>Araport11: a complete reannotation of the Arabidopsis thaliana reference genome.</title>
        <authorList>
            <person name="Cheng C.Y."/>
            <person name="Krishnakumar V."/>
            <person name="Chan A.P."/>
            <person name="Thibaud-Nissen F."/>
            <person name="Schobel S."/>
            <person name="Town C.D."/>
        </authorList>
    </citation>
    <scope>GENOME REANNOTATION</scope>
    <source>
        <strain>cv. Columbia</strain>
    </source>
</reference>
<reference key="3">
    <citation type="journal article" date="2003" name="Science">
        <title>Empirical analysis of transcriptional activity in the Arabidopsis genome.</title>
        <authorList>
            <person name="Yamada K."/>
            <person name="Lim J."/>
            <person name="Dale J.M."/>
            <person name="Chen H."/>
            <person name="Shinn P."/>
            <person name="Palm C.J."/>
            <person name="Southwick A.M."/>
            <person name="Wu H.C."/>
            <person name="Kim C.J."/>
            <person name="Nguyen M."/>
            <person name="Pham P.K."/>
            <person name="Cheuk R.F."/>
            <person name="Karlin-Newmann G."/>
            <person name="Liu S.X."/>
            <person name="Lam B."/>
            <person name="Sakano H."/>
            <person name="Wu T."/>
            <person name="Yu G."/>
            <person name="Miranda M."/>
            <person name="Quach H.L."/>
            <person name="Tripp M."/>
            <person name="Chang C.H."/>
            <person name="Lee J.M."/>
            <person name="Toriumi M.J."/>
            <person name="Chan M.M."/>
            <person name="Tang C.C."/>
            <person name="Onodera C.S."/>
            <person name="Deng J.M."/>
            <person name="Akiyama K."/>
            <person name="Ansari Y."/>
            <person name="Arakawa T."/>
            <person name="Banh J."/>
            <person name="Banno F."/>
            <person name="Bowser L."/>
            <person name="Brooks S.Y."/>
            <person name="Carninci P."/>
            <person name="Chao Q."/>
            <person name="Choy N."/>
            <person name="Enju A."/>
            <person name="Goldsmith A.D."/>
            <person name="Gurjal M."/>
            <person name="Hansen N.F."/>
            <person name="Hayashizaki Y."/>
            <person name="Johnson-Hopson C."/>
            <person name="Hsuan V.W."/>
            <person name="Iida K."/>
            <person name="Karnes M."/>
            <person name="Khan S."/>
            <person name="Koesema E."/>
            <person name="Ishida J."/>
            <person name="Jiang P.X."/>
            <person name="Jones T."/>
            <person name="Kawai J."/>
            <person name="Kamiya A."/>
            <person name="Meyers C."/>
            <person name="Nakajima M."/>
            <person name="Narusaka M."/>
            <person name="Seki M."/>
            <person name="Sakurai T."/>
            <person name="Satou M."/>
            <person name="Tamse R."/>
            <person name="Vaysberg M."/>
            <person name="Wallender E.K."/>
            <person name="Wong C."/>
            <person name="Yamamura Y."/>
            <person name="Yuan S."/>
            <person name="Shinozaki K."/>
            <person name="Davis R.W."/>
            <person name="Theologis A."/>
            <person name="Ecker J.R."/>
        </authorList>
    </citation>
    <scope>NUCLEOTIDE SEQUENCE [LARGE SCALE MRNA] (ISOFORM 1)</scope>
    <source>
        <strain>cv. Columbia</strain>
    </source>
</reference>
<reference key="4">
    <citation type="submission" date="2002-03" db="EMBL/GenBank/DDBJ databases">
        <title>Full-length cDNA from Arabidopsis thaliana.</title>
        <authorList>
            <person name="Brover V.V."/>
            <person name="Troukhan M.E."/>
            <person name="Alexandrov N.A."/>
            <person name="Lu Y.-P."/>
            <person name="Flavell R.B."/>
            <person name="Feldmann K.A."/>
        </authorList>
    </citation>
    <scope>NUCLEOTIDE SEQUENCE [LARGE SCALE MRNA] (ISOFORM 2)</scope>
</reference>
<reference key="5">
    <citation type="journal article" date="2005" name="Plant Cell Environ.">
        <title>Multiple iso-proteins of FNR in Arabidopsis: evidence for different contributions to chloroplast function and nitrogen assimilation.</title>
        <authorList>
            <person name="Hanke G.T."/>
            <person name="Okutani S."/>
            <person name="Satomi Y."/>
            <person name="Takao T."/>
            <person name="Suzuki A."/>
            <person name="Hase T."/>
        </authorList>
    </citation>
    <scope>FUNCTION</scope>
    <scope>INDUCTION</scope>
    <scope>TISSUE SPECIFICITY</scope>
    <scope>IDENTIFICATION BY MASS SPECTROMETRY</scope>
    <scope>GENE FAMILY</scope>
    <scope>NOMENCLATURE</scope>
    <source>
        <strain>cv. Columbia</strain>
    </source>
</reference>
<name>FNRR2_ARATH</name>
<proteinExistence type="evidence at protein level"/>
<accession>Q9S9P8</accession>
<accession>Q3ED46</accession>
<accession>Q3ED47</accession>
<accession>Q8LA56</accession>
<sequence length="382" mass="42789">MSHSAVSQAGAVSVSIENQRSLRRSVFKQNNSISFNSKSWSSSLALNQKTTSIRDGKRYPSTTICMSVQQTSSSKVTVSPIELEDPKDPPLNLYKPKESYTAKIVSVERVVGPKAPGETCHIVIDHDGNLPYWEGQSYGVIPPGENPKKPGAPHNVRLYSIASTRYGDFFDGKTASLCVRRAVYYDPETGKEDPSKNGVCSNFLCDSKPGDKIQITGPSGKVMLLPESDPNATHIMIATGTGVAPYRGYLRRMFMENVPNKTFSGLAWLFLGVANTDSLLYDEEFTKYLKDHPDNFRFDKALSREEKNKKGGKMYVQDKIEEYSDEIFKLLDNGAHIYFCGLKGMMPGIQDTLKRVAEERGESWDLKLSQLRKNKQWHVEVY</sequence>
<dbReference type="EC" id="1.18.1.2"/>
<dbReference type="EMBL" id="AC009917">
    <property type="protein sequence ID" value="AAF19753.1"/>
    <property type="molecule type" value="Genomic_DNA"/>
</dbReference>
<dbReference type="EMBL" id="CP002684">
    <property type="protein sequence ID" value="AEE31235.1"/>
    <property type="molecule type" value="Genomic_DNA"/>
</dbReference>
<dbReference type="EMBL" id="CP002684">
    <property type="protein sequence ID" value="AEE31236.1"/>
    <property type="molecule type" value="Genomic_DNA"/>
</dbReference>
<dbReference type="EMBL" id="CP002684">
    <property type="protein sequence ID" value="AEE31237.1"/>
    <property type="molecule type" value="Genomic_DNA"/>
</dbReference>
<dbReference type="EMBL" id="AF424594">
    <property type="protein sequence ID" value="AAL11588.1"/>
    <property type="molecule type" value="mRNA"/>
</dbReference>
<dbReference type="EMBL" id="AY140017">
    <property type="protein sequence ID" value="AAM98159.1"/>
    <property type="molecule type" value="mRNA"/>
</dbReference>
<dbReference type="EMBL" id="BT008468">
    <property type="protein sequence ID" value="AAP37827.1"/>
    <property type="molecule type" value="mRNA"/>
</dbReference>
<dbReference type="EMBL" id="AY088018">
    <property type="protein sequence ID" value="AAM65564.1"/>
    <property type="molecule type" value="mRNA"/>
</dbReference>
<dbReference type="PIR" id="B86430">
    <property type="entry name" value="B86430"/>
</dbReference>
<dbReference type="RefSeq" id="NP_564355.1">
    <molecule id="Q9S9P8-2"/>
    <property type="nucleotide sequence ID" value="NM_102787.1"/>
</dbReference>
<dbReference type="RefSeq" id="NP_849734.1">
    <molecule id="Q9S9P8-1"/>
    <property type="nucleotide sequence ID" value="NM_179403.4"/>
</dbReference>
<dbReference type="RefSeq" id="NP_973942.1">
    <molecule id="Q9S9P8-3"/>
    <property type="nucleotide sequence ID" value="NM_202213.1"/>
</dbReference>
<dbReference type="SMR" id="Q9S9P8"/>
<dbReference type="BioGRID" id="25165">
    <property type="interactions" value="3"/>
</dbReference>
<dbReference type="FunCoup" id="Q9S9P8">
    <property type="interactions" value="56"/>
</dbReference>
<dbReference type="STRING" id="3702.Q9S9P8"/>
<dbReference type="PaxDb" id="3702-AT1G30510.2"/>
<dbReference type="ProteomicsDB" id="230556">
    <molecule id="Q9S9P8-1"/>
</dbReference>
<dbReference type="EnsemblPlants" id="AT1G30510.1">
    <molecule id="Q9S9P8-2"/>
    <property type="protein sequence ID" value="AT1G30510.1"/>
    <property type="gene ID" value="AT1G30510"/>
</dbReference>
<dbReference type="EnsemblPlants" id="AT1G30510.2">
    <molecule id="Q9S9P8-1"/>
    <property type="protein sequence ID" value="AT1G30510.2"/>
    <property type="gene ID" value="AT1G30510"/>
</dbReference>
<dbReference type="EnsemblPlants" id="AT1G30510.3">
    <molecule id="Q9S9P8-3"/>
    <property type="protein sequence ID" value="AT1G30510.3"/>
    <property type="gene ID" value="AT1G30510"/>
</dbReference>
<dbReference type="GeneID" id="839930"/>
<dbReference type="Gramene" id="AT1G30510.1">
    <molecule id="Q9S9P8-2"/>
    <property type="protein sequence ID" value="AT1G30510.1"/>
    <property type="gene ID" value="AT1G30510"/>
</dbReference>
<dbReference type="Gramene" id="AT1G30510.2">
    <molecule id="Q9S9P8-1"/>
    <property type="protein sequence ID" value="AT1G30510.2"/>
    <property type="gene ID" value="AT1G30510"/>
</dbReference>
<dbReference type="Gramene" id="AT1G30510.3">
    <molecule id="Q9S9P8-3"/>
    <property type="protein sequence ID" value="AT1G30510.3"/>
    <property type="gene ID" value="AT1G30510"/>
</dbReference>
<dbReference type="KEGG" id="ath:AT1G30510"/>
<dbReference type="Araport" id="AT1G30510"/>
<dbReference type="TAIR" id="AT1G30510">
    <property type="gene designation" value="RFNR2"/>
</dbReference>
<dbReference type="eggNOG" id="KOG1158">
    <property type="taxonomic scope" value="Eukaryota"/>
</dbReference>
<dbReference type="InParanoid" id="Q9S9P8"/>
<dbReference type="PhylomeDB" id="Q9S9P8"/>
<dbReference type="BioCyc" id="ARA:AT1G30510-MONOMER"/>
<dbReference type="PRO" id="PR:Q9S9P8"/>
<dbReference type="Proteomes" id="UP000006548">
    <property type="component" value="Chromosome 1"/>
</dbReference>
<dbReference type="ExpressionAtlas" id="Q9S9P8">
    <property type="expression patterns" value="baseline and differential"/>
</dbReference>
<dbReference type="GO" id="GO:0009507">
    <property type="term" value="C:chloroplast"/>
    <property type="evidence" value="ECO:0007005"/>
    <property type="project" value="TAIR"/>
</dbReference>
<dbReference type="GO" id="GO:0005507">
    <property type="term" value="F:copper ion binding"/>
    <property type="evidence" value="ECO:0007005"/>
    <property type="project" value="TAIR"/>
</dbReference>
<dbReference type="GO" id="GO:0004324">
    <property type="term" value="F:ferredoxin-NADP+ reductase activity"/>
    <property type="evidence" value="ECO:0007669"/>
    <property type="project" value="UniProtKB-EC"/>
</dbReference>
<dbReference type="GO" id="GO:0015979">
    <property type="term" value="P:photosynthesis"/>
    <property type="evidence" value="ECO:0007669"/>
    <property type="project" value="UniProtKB-KW"/>
</dbReference>
<dbReference type="CDD" id="cd06208">
    <property type="entry name" value="CYPOR_like_FNR"/>
    <property type="match status" value="1"/>
</dbReference>
<dbReference type="FunFam" id="2.40.30.10:FF:000048">
    <property type="entry name" value="Ferredoxin--NADP reductase, chloroplastic"/>
    <property type="match status" value="1"/>
</dbReference>
<dbReference type="FunFam" id="3.40.50.80:FF:000008">
    <property type="entry name" value="Ferredoxin--NADP reductase, chloroplastic"/>
    <property type="match status" value="1"/>
</dbReference>
<dbReference type="Gene3D" id="3.40.50.80">
    <property type="entry name" value="Nucleotide-binding domain of ferredoxin-NADP reductase (FNR) module"/>
    <property type="match status" value="1"/>
</dbReference>
<dbReference type="Gene3D" id="2.40.30.10">
    <property type="entry name" value="Translation factors"/>
    <property type="match status" value="1"/>
</dbReference>
<dbReference type="InterPro" id="IPR017927">
    <property type="entry name" value="FAD-bd_FR_type"/>
</dbReference>
<dbReference type="InterPro" id="IPR001709">
    <property type="entry name" value="Flavoprot_Pyr_Nucl_cyt_Rdtase"/>
</dbReference>
<dbReference type="InterPro" id="IPR015701">
    <property type="entry name" value="FNR"/>
</dbReference>
<dbReference type="InterPro" id="IPR039261">
    <property type="entry name" value="FNR_nucleotide-bd"/>
</dbReference>
<dbReference type="InterPro" id="IPR035442">
    <property type="entry name" value="FNR_plant_Cyanobacteria"/>
</dbReference>
<dbReference type="InterPro" id="IPR001433">
    <property type="entry name" value="OxRdtase_FAD/NAD-bd"/>
</dbReference>
<dbReference type="InterPro" id="IPR017938">
    <property type="entry name" value="Riboflavin_synthase-like_b-brl"/>
</dbReference>
<dbReference type="PANTHER" id="PTHR43314">
    <property type="match status" value="1"/>
</dbReference>
<dbReference type="Pfam" id="PF00175">
    <property type="entry name" value="NAD_binding_1"/>
    <property type="match status" value="1"/>
</dbReference>
<dbReference type="PIRSF" id="PIRSF501178">
    <property type="entry name" value="FNR-PetH"/>
    <property type="match status" value="1"/>
</dbReference>
<dbReference type="PIRSF" id="PIRSF000361">
    <property type="entry name" value="Frd-NADP+_RD"/>
    <property type="match status" value="1"/>
</dbReference>
<dbReference type="PRINTS" id="PR00371">
    <property type="entry name" value="FPNCR"/>
</dbReference>
<dbReference type="SUPFAM" id="SSF52343">
    <property type="entry name" value="Ferredoxin reductase-like, C-terminal NADP-linked domain"/>
    <property type="match status" value="1"/>
</dbReference>
<dbReference type="SUPFAM" id="SSF63380">
    <property type="entry name" value="Riboflavin synthase domain-like"/>
    <property type="match status" value="1"/>
</dbReference>
<dbReference type="PROSITE" id="PS51384">
    <property type="entry name" value="FAD_FR"/>
    <property type="match status" value="1"/>
</dbReference>
<evidence type="ECO:0000250" key="1"/>
<evidence type="ECO:0000250" key="2">
    <source>
        <dbReference type="UniProtKB" id="Q9FKW6"/>
    </source>
</evidence>
<evidence type="ECO:0000255" key="3"/>
<evidence type="ECO:0000255" key="4">
    <source>
        <dbReference type="PROSITE-ProRule" id="PRU00716"/>
    </source>
</evidence>
<evidence type="ECO:0000269" key="5">
    <source ref="5"/>
</evidence>
<evidence type="ECO:0000303" key="6">
    <source ref="4"/>
</evidence>
<evidence type="ECO:0000305" key="7"/>
<comment type="function">
    <text evidence="5">Maintains the supply of reduced ferredoxin under non-photosynthetic conditions.</text>
</comment>
<comment type="catalytic activity">
    <reaction>
        <text>2 reduced [2Fe-2S]-[ferredoxin] + NADP(+) + H(+) = 2 oxidized [2Fe-2S]-[ferredoxin] + NADPH</text>
        <dbReference type="Rhea" id="RHEA:20125"/>
        <dbReference type="Rhea" id="RHEA-COMP:10000"/>
        <dbReference type="Rhea" id="RHEA-COMP:10001"/>
        <dbReference type="ChEBI" id="CHEBI:15378"/>
        <dbReference type="ChEBI" id="CHEBI:33737"/>
        <dbReference type="ChEBI" id="CHEBI:33738"/>
        <dbReference type="ChEBI" id="CHEBI:57783"/>
        <dbReference type="ChEBI" id="CHEBI:58349"/>
        <dbReference type="EC" id="1.18.1.2"/>
    </reaction>
</comment>
<comment type="cofactor">
    <cofactor>
        <name>FAD</name>
        <dbReference type="ChEBI" id="CHEBI:57692"/>
    </cofactor>
</comment>
<comment type="subcellular location">
    <subcellularLocation>
        <location evidence="7">Plastid</location>
        <location evidence="7">Chloroplast</location>
    </subcellularLocation>
</comment>
<comment type="alternative products">
    <event type="alternative splicing"/>
    <isoform>
        <id>Q9S9P8-1</id>
        <name>1</name>
        <sequence type="displayed"/>
    </isoform>
    <isoform>
        <id>Q9S9P8-2</id>
        <name>2</name>
        <sequence type="described" ref="VSP_031939"/>
    </isoform>
    <isoform>
        <id>Q9S9P8-3</id>
        <name>3</name>
        <sequence type="described" ref="VSP_031938"/>
    </isoform>
</comment>
<comment type="tissue specificity">
    <text evidence="5">Expressed in shoots and roots. More abundant in roots than RFNR1.</text>
</comment>
<comment type="induction">
    <text evidence="5">Up-regulated by nitrate in roots while down-regulated in shoots.</text>
</comment>
<comment type="similarity">
    <text evidence="7">Belongs to the ferredoxin--NADP reductase type 1 family.</text>
</comment>
<organism>
    <name type="scientific">Arabidopsis thaliana</name>
    <name type="common">Mouse-ear cress</name>
    <dbReference type="NCBI Taxonomy" id="3702"/>
    <lineage>
        <taxon>Eukaryota</taxon>
        <taxon>Viridiplantae</taxon>
        <taxon>Streptophyta</taxon>
        <taxon>Embryophyta</taxon>
        <taxon>Tracheophyta</taxon>
        <taxon>Spermatophyta</taxon>
        <taxon>Magnoliopsida</taxon>
        <taxon>eudicotyledons</taxon>
        <taxon>Gunneridae</taxon>
        <taxon>Pentapetalae</taxon>
        <taxon>rosids</taxon>
        <taxon>malvids</taxon>
        <taxon>Brassicales</taxon>
        <taxon>Brassicaceae</taxon>
        <taxon>Camelineae</taxon>
        <taxon>Arabidopsis</taxon>
    </lineage>
</organism>
<gene>
    <name type="primary">RFNR2</name>
    <name type="synonym">PETH4</name>
    <name type="ordered locus">At1g30510</name>
    <name type="ORF">F26G16.13</name>
</gene>